<organism>
    <name type="scientific">Austrophasma rawsonvillense</name>
    <name type="common">Gladiator</name>
    <name type="synonym">Heel-walker</name>
    <dbReference type="NCBI Taxonomy" id="253137"/>
    <lineage>
        <taxon>Eukaryota</taxon>
        <taxon>Metazoa</taxon>
        <taxon>Ecdysozoa</taxon>
        <taxon>Arthropoda</taxon>
        <taxon>Hexapoda</taxon>
        <taxon>Insecta</taxon>
        <taxon>Pterygota</taxon>
        <taxon>Neoptera</taxon>
        <taxon>Polyneoptera</taxon>
        <taxon>Mantophasmatodea</taxon>
        <taxon>Austrophasmatidae</taxon>
        <taxon>Austrophasma</taxon>
    </lineage>
</organism>
<evidence type="ECO:0000250" key="1">
    <source>
        <dbReference type="UniProtKB" id="P82619"/>
    </source>
</evidence>
<evidence type="ECO:0000255" key="2"/>
<evidence type="ECO:0000269" key="3">
    <source>
    </source>
</evidence>
<evidence type="ECO:0000303" key="4">
    <source>
    </source>
</evidence>
<evidence type="ECO:0000305" key="5"/>
<evidence type="ECO:0000305" key="6">
    <source>
    </source>
</evidence>
<comment type="function">
    <text evidence="1">Myoactive.</text>
</comment>
<comment type="subcellular location">
    <subcellularLocation>
        <location evidence="6">Secreted</location>
    </subcellularLocation>
</comment>
<comment type="similarity">
    <text evidence="2">Belongs to the pyrokinin family.</text>
</comment>
<accession>B3A0B3</accession>
<dbReference type="GO" id="GO:0005576">
    <property type="term" value="C:extracellular region"/>
    <property type="evidence" value="ECO:0007669"/>
    <property type="project" value="UniProtKB-SubCell"/>
</dbReference>
<dbReference type="GO" id="GO:0007218">
    <property type="term" value="P:neuropeptide signaling pathway"/>
    <property type="evidence" value="ECO:0007669"/>
    <property type="project" value="UniProtKB-KW"/>
</dbReference>
<dbReference type="PROSITE" id="PS00539">
    <property type="entry name" value="PYROKININ"/>
    <property type="match status" value="1"/>
</dbReference>
<feature type="peptide" id="PRO_0000421593" description="Pyrokinin-3" evidence="3">
    <location>
        <begin position="1"/>
        <end position="8"/>
    </location>
</feature>
<feature type="modified residue" description="Leucine amide" evidence="3">
    <location>
        <position position="8"/>
    </location>
</feature>
<keyword id="KW-0027">Amidation</keyword>
<keyword id="KW-0903">Direct protein sequencing</keyword>
<keyword id="KW-0527">Neuropeptide</keyword>
<keyword id="KW-0964">Secreted</keyword>
<protein>
    <recommendedName>
        <fullName evidence="4">Pyrokinin-3</fullName>
        <shortName evidence="4">PK-3</shortName>
    </recommendedName>
    <alternativeName>
        <fullName evidence="1">FXPRL-amide</fullName>
    </alternativeName>
</protein>
<reference evidence="5" key="1">
    <citation type="journal article" date="2012" name="Syst. Biol.">
        <title>Peptidomics-based phylogeny and biogeography of Mantophasmatodea (Hexapoda).</title>
        <authorList>
            <person name="Predel R."/>
            <person name="Neupert S."/>
            <person name="Huetteroth W."/>
            <person name="Kahnt J."/>
            <person name="Waidelich D."/>
            <person name="Roth S."/>
        </authorList>
    </citation>
    <scope>PROTEIN SEQUENCE</scope>
    <scope>AMIDATION AT LEU-8</scope>
    <source>
        <tissue evidence="3">Corpora cardiaca</tissue>
    </source>
</reference>
<sequence length="8" mass="928">DPPFSPRL</sequence>
<name>PPK3_AUSRA</name>
<proteinExistence type="evidence at protein level"/>